<name>AT133_MACFA</name>
<protein>
    <recommendedName>
        <fullName>Polyamine-transporting ATPase 13A3</fullName>
    </recommendedName>
    <alternativeName>
        <fullName>ATPase family homolog up-regulated in senescence cells 1</fullName>
    </alternativeName>
    <alternativeName>
        <fullName>Putrescine transporting ATPase</fullName>
        <ecNumber evidence="2">7.6.2.16</ecNumber>
    </alternativeName>
</protein>
<sequence length="1226" mass="137807">MDKEERKIINQGQEDEMEIYGYNLSRWKLAIVSLGVICTGGFLLLLLYWMPEWRVKATCVRAAIKDCDVVLLRTTDEFKMWFCAKIRVLSLETHPISSPKSMSNKLSNGHAVCLTENPTGENRHGISKYSQAESQQIRYFTHHSVKYFWNDTIHNFDFLKGLDEGVSCTSIYEKHSAGLTKGMHAYRKLLYGVNEIAVKVPSVFKLLIKEVLNPFYIFQLFSVILWSTDEYYYYALAIVVMSIVSIVSSLYSIRKQYVMLHDMVATHSTVRVSVCRVNEEIEEIFSTDLVPGDVMVIPLNGTIMPCDAVLINGTCIVNESMLTGESVPVTKTNLPNPSVDVKGIGDELYNPETHKRHTLFCGTTVIQTRFYTGELVKAIVVRTGFSTSKGQLVRSILYPKPTDFKLYRDAYLFLLCLVAVAGIGFIYTIINSILNEVQVGVIIIESLDIITITVPPALPAAMTAGIVYAQRRLKKIGIFCISPQRINICGQLNLVCFDKTGTLTEDGLDLWGIQRVENARFLSPEENVCNEMLVKSQFVACLATCHSLTKIEGVLSGDPLDLKMFEAIGWILEEATEEETALHNRIMPTVVRPPKQLLPESTPAGNQEMELFELPAIYEIGIVRQFPFSSALQRMSVVARVLGDKKMDAYMKGAPEVIASLCKPETVPVDFQNVLEDFTKQGFRVIALAHRKLESKLTWHKVQNISRDAIENNMDFMGLIIMQNKLKQETPAVLEDLHKANIRTVMVTGDNMLTAVSVARDCGMILPQDKVIIAEALPPKDGKVAKINWHYADSLTQCSHPSAIASEATPVKLVHDSLEDLQMTRYHFAMNGKSFSVILEHFQDLVPKLMLHGTVFARMAPDQKTQLIEALQNVDYFVGMCGDGANDCGALKRAHGGISLSELEASVASPFTSKTPSISCVPNLIREGRAALITSFCVFKFMALYSIIQYFSVTLLYSILSNLGDFQFLFIDLAIILVVVFTMSLNPAWKELVAQRPPSGLISGALLFSVLSQIIICIGFQSLGFFWVKQQPWYEVWHPKSDACNATGSLLWNSSHLDNETELDEHNIQNYENTTVFFISSFQYLIVAIAFSKGKPFRQPCYKNYFFVFSVIFLYVFILFIMLYPVASVDQVLQIVCVPYQWRVTMLIIVLVNAFVSITVEESVDRWRKCCLPWALSCGKKIPKAKYMYLAQELLVDPEWPPKPQTTTEAKGLVKENGSCQIITIT</sequence>
<evidence type="ECO:0000250" key="1">
    <source>
        <dbReference type="UniProtKB" id="P39986"/>
    </source>
</evidence>
<evidence type="ECO:0000250" key="2">
    <source>
        <dbReference type="UniProtKB" id="Q9H7F0"/>
    </source>
</evidence>
<evidence type="ECO:0000250" key="3">
    <source>
        <dbReference type="UniProtKB" id="Q9NQ11"/>
    </source>
</evidence>
<evidence type="ECO:0000250" key="4">
    <source>
        <dbReference type="UniProtKB" id="Q9Y2Q0"/>
    </source>
</evidence>
<evidence type="ECO:0000255" key="5"/>
<evidence type="ECO:0000305" key="6"/>
<accession>Q95JN5</accession>
<accession>A0A2K5X2G9</accession>
<accession>G7NYR4</accession>
<proteinExistence type="evidence at transcript level"/>
<comment type="function">
    <text evidence="2">ATP-driven pump involved in endocytosis-dependent polyamine transport. Uses ATP as an energy source to transfer polyamine precursor putrescine from the endosomal compartment to the cytosol.</text>
</comment>
<comment type="catalytic activity">
    <reaction evidence="2">
        <text>putrescine(out) + ATP + H2O = putrescine(in) + ADP + phosphate + H(+)</text>
        <dbReference type="Rhea" id="RHEA:29995"/>
        <dbReference type="ChEBI" id="CHEBI:15377"/>
        <dbReference type="ChEBI" id="CHEBI:15378"/>
        <dbReference type="ChEBI" id="CHEBI:30616"/>
        <dbReference type="ChEBI" id="CHEBI:43474"/>
        <dbReference type="ChEBI" id="CHEBI:326268"/>
        <dbReference type="ChEBI" id="CHEBI:456216"/>
        <dbReference type="EC" id="7.6.2.16"/>
    </reaction>
    <physiologicalReaction direction="left-to-right" evidence="2">
        <dbReference type="Rhea" id="RHEA:29996"/>
    </physiologicalReaction>
</comment>
<comment type="subcellular location">
    <subcellularLocation>
        <location evidence="2">Recycling endosome membrane</location>
        <topology evidence="5">Multi-pass membrane protein</topology>
    </subcellularLocation>
    <subcellularLocation>
        <location evidence="2">Early endosome membrane</location>
        <topology evidence="5">Multi-pass membrane protein</topology>
    </subcellularLocation>
    <subcellularLocation>
        <location evidence="2">Late endosome membrane</location>
        <topology evidence="5">Multi-pass membrane protein</topology>
    </subcellularLocation>
    <text evidence="2">Mainly targeted to the recycling endosomes and to a lesser extent to the early and late endosomes.</text>
</comment>
<comment type="alternative products">
    <event type="alternative splicing"/>
    <isoform>
        <id>Q95JN5-1</id>
        <name>1</name>
        <sequence type="displayed"/>
    </isoform>
    <isoform>
        <id>Q95JN5-2</id>
        <name>2</name>
        <sequence type="described" ref="VSP_061098 VSP_061099 VSP_061100"/>
    </isoform>
    <isoform>
        <id>Q95JN5-3</id>
        <name>3</name>
        <sequence type="described" ref="VSP_061100"/>
    </isoform>
</comment>
<comment type="similarity">
    <text evidence="6">Belongs to the cation transport ATPase (P-type) (TC 3.A.3) family. Type V subfamily.</text>
</comment>
<comment type="sequence caution" evidence="6">
    <conflict type="miscellaneous discrepancy">
        <sequence resource="EMBL-CDS" id="BAB63091"/>
    </conflict>
    <text>Contaminating sequence. Potential poly-A sequence.</text>
</comment>
<gene>
    <name type="primary">ATP13A3</name>
    <name type="synonym">AFURS1</name>
    <name type="ORF">QtsA-14967</name>
</gene>
<reference key="1">
    <citation type="submission" date="2013-03" db="EMBL/GenBank/DDBJ databases">
        <authorList>
            <person name="Warren W."/>
            <person name="Wilson R.K."/>
        </authorList>
    </citation>
    <scope>NUCLEOTIDE SEQUENCE [LARGE SCALE GENOMIC DNA]</scope>
</reference>
<reference key="2">
    <citation type="journal article" date="2002" name="BMC Genomics">
        <title>Cynomolgus monkey testicular cDNAs for discovery of novel human genes in the human genome sequence.</title>
        <authorList>
            <person name="Osada N."/>
            <person name="Hida M."/>
            <person name="Kusuda J."/>
            <person name="Tanuma R."/>
            <person name="Hirata M."/>
            <person name="Suto Y."/>
            <person name="Hirai M."/>
            <person name="Terao K."/>
            <person name="Sugano S."/>
            <person name="Hashimoto K."/>
        </authorList>
    </citation>
    <scope>NUCLEOTIDE SEQUENCE [LARGE SCALE MRNA] OF 1-493</scope>
    <source>
        <tissue>Testis</tissue>
    </source>
</reference>
<organism>
    <name type="scientific">Macaca fascicularis</name>
    <name type="common">Crab-eating macaque</name>
    <name type="synonym">Cynomolgus monkey</name>
    <dbReference type="NCBI Taxonomy" id="9541"/>
    <lineage>
        <taxon>Eukaryota</taxon>
        <taxon>Metazoa</taxon>
        <taxon>Chordata</taxon>
        <taxon>Craniata</taxon>
        <taxon>Vertebrata</taxon>
        <taxon>Euteleostomi</taxon>
        <taxon>Mammalia</taxon>
        <taxon>Eutheria</taxon>
        <taxon>Euarchontoglires</taxon>
        <taxon>Primates</taxon>
        <taxon>Haplorrhini</taxon>
        <taxon>Catarrhini</taxon>
        <taxon>Cercopithecidae</taxon>
        <taxon>Cercopithecinae</taxon>
        <taxon>Macaca</taxon>
    </lineage>
</organism>
<feature type="chain" id="PRO_0000046426" description="Polyamine-transporting ATPase 13A3">
    <location>
        <begin position="1"/>
        <end position="1226"/>
    </location>
</feature>
<feature type="topological domain" description="Cytoplasmic" evidence="2">
    <location>
        <begin position="1"/>
        <end position="28"/>
    </location>
</feature>
<feature type="intramembrane region" evidence="2">
    <location>
        <begin position="29"/>
        <end position="49"/>
    </location>
</feature>
<feature type="topological domain" description="Cytoplasmic" evidence="2">
    <location>
        <begin position="50"/>
        <end position="205"/>
    </location>
</feature>
<feature type="transmembrane region" description="Helical" evidence="5">
    <location>
        <begin position="206"/>
        <end position="226"/>
    </location>
</feature>
<feature type="topological domain" description="Lumenal" evidence="2">
    <location>
        <begin position="227"/>
        <end position="232"/>
    </location>
</feature>
<feature type="transmembrane region" description="Helical" evidence="5">
    <location>
        <begin position="233"/>
        <end position="253"/>
    </location>
</feature>
<feature type="topological domain" description="Cytoplasmic" evidence="2">
    <location>
        <begin position="254"/>
        <end position="409"/>
    </location>
</feature>
<feature type="transmembrane region" description="Helical" evidence="5">
    <location>
        <begin position="410"/>
        <end position="430"/>
    </location>
</feature>
<feature type="topological domain" description="Lumenal" evidence="2">
    <location>
        <begin position="431"/>
        <end position="448"/>
    </location>
</feature>
<feature type="transmembrane region" description="Helical" evidence="5">
    <location>
        <begin position="449"/>
        <end position="469"/>
    </location>
</feature>
<feature type="topological domain" description="Cytoplasmic" evidence="2">
    <location>
        <begin position="470"/>
        <end position="940"/>
    </location>
</feature>
<feature type="transmembrane region" description="Helical" evidence="5">
    <location>
        <begin position="941"/>
        <end position="961"/>
    </location>
</feature>
<feature type="topological domain" description="Lumenal" evidence="2">
    <location>
        <position position="962"/>
    </location>
</feature>
<feature type="transmembrane region" description="Helical" evidence="5">
    <location>
        <begin position="963"/>
        <end position="983"/>
    </location>
</feature>
<feature type="topological domain" description="Cytoplasmic" evidence="2">
    <location>
        <begin position="984"/>
        <end position="999"/>
    </location>
</feature>
<feature type="transmembrane region" description="Helical" evidence="5">
    <location>
        <begin position="1000"/>
        <end position="1020"/>
    </location>
</feature>
<feature type="topological domain" description="Lumenal" evidence="2">
    <location>
        <begin position="1021"/>
        <end position="1073"/>
    </location>
</feature>
<feature type="transmembrane region" description="Helical" evidence="5">
    <location>
        <begin position="1074"/>
        <end position="1094"/>
    </location>
</feature>
<feature type="topological domain" description="Cytoplasmic" evidence="2">
    <location>
        <begin position="1095"/>
        <end position="1105"/>
    </location>
</feature>
<feature type="transmembrane region" description="Helical" evidence="5">
    <location>
        <begin position="1106"/>
        <end position="1126"/>
    </location>
</feature>
<feature type="topological domain" description="Lumenal" evidence="2">
    <location>
        <begin position="1127"/>
        <end position="1143"/>
    </location>
</feature>
<feature type="transmembrane region" description="Helical" evidence="5">
    <location>
        <begin position="1144"/>
        <end position="1164"/>
    </location>
</feature>
<feature type="topological domain" description="Cytoplasmic" evidence="2">
    <location>
        <begin position="1165"/>
        <end position="1226"/>
    </location>
</feature>
<feature type="active site" description="4-aspartylphosphate intermediate" evidence="3">
    <location>
        <position position="498"/>
    </location>
</feature>
<feature type="binding site" evidence="1">
    <location>
        <begin position="498"/>
        <end position="500"/>
    </location>
    <ligand>
        <name>ATP</name>
        <dbReference type="ChEBI" id="CHEBI:30616"/>
    </ligand>
</feature>
<feature type="binding site" evidence="1">
    <location>
        <position position="498"/>
    </location>
    <ligand>
        <name>Mg(2+)</name>
        <dbReference type="ChEBI" id="CHEBI:18420"/>
    </ligand>
</feature>
<feature type="binding site" evidence="1">
    <location>
        <position position="500"/>
    </location>
    <ligand>
        <name>Mg(2+)</name>
        <dbReference type="ChEBI" id="CHEBI:18420"/>
    </ligand>
</feature>
<feature type="binding site" evidence="4">
    <location>
        <position position="628"/>
    </location>
    <ligand>
        <name>ATP</name>
        <dbReference type="ChEBI" id="CHEBI:30616"/>
    </ligand>
</feature>
<feature type="binding site" evidence="1">
    <location>
        <position position="684"/>
    </location>
    <ligand>
        <name>ATP</name>
        <dbReference type="ChEBI" id="CHEBI:30616"/>
    </ligand>
</feature>
<feature type="binding site" evidence="1">
    <location>
        <position position="750"/>
    </location>
    <ligand>
        <name>ATP</name>
        <dbReference type="ChEBI" id="CHEBI:30616"/>
    </ligand>
</feature>
<feature type="binding site" evidence="1">
    <location>
        <begin position="883"/>
        <end position="887"/>
    </location>
    <ligand>
        <name>ATP</name>
        <dbReference type="ChEBI" id="CHEBI:30616"/>
    </ligand>
</feature>
<feature type="binding site" evidence="1">
    <location>
        <position position="883"/>
    </location>
    <ligand>
        <name>Mg(2+)</name>
        <dbReference type="ChEBI" id="CHEBI:18420"/>
    </ligand>
</feature>
<feature type="modified residue" description="Phosphoserine" evidence="2">
    <location>
        <position position="98"/>
    </location>
</feature>
<feature type="modified residue" description="Phosphoserine" evidence="2">
    <location>
        <position position="817"/>
    </location>
</feature>
<feature type="splice variant" id="VSP_061098" description="In isoform 2.">
    <location>
        <begin position="161"/>
        <end position="187"/>
    </location>
</feature>
<feature type="splice variant" id="VSP_061099" description="In isoform 2.">
    <original>AIYE</original>
    <variation>VSEECLL</variation>
    <location>
        <begin position="616"/>
        <end position="619"/>
    </location>
</feature>
<feature type="splice variant" id="VSP_061100" description="In isoform 2 and isoform 3.">
    <original>E</original>
    <variation>ENFFLDMVLWKVVFNRDKQGEYRFSTTQPPQ</variation>
    <location>
        <position position="1161"/>
    </location>
</feature>
<dbReference type="EC" id="7.6.2.16" evidence="2"/>
<dbReference type="EMBL" id="AQIA01037294">
    <property type="status" value="NOT_ANNOTATED_CDS"/>
    <property type="molecule type" value="Genomic_DNA"/>
</dbReference>
<dbReference type="EMBL" id="AQIA01037295">
    <property type="status" value="NOT_ANNOTATED_CDS"/>
    <property type="molecule type" value="Genomic_DNA"/>
</dbReference>
<dbReference type="EMBL" id="AQIA01037296">
    <property type="status" value="NOT_ANNOTATED_CDS"/>
    <property type="molecule type" value="Genomic_DNA"/>
</dbReference>
<dbReference type="EMBL" id="AQIA01037297">
    <property type="status" value="NOT_ANNOTATED_CDS"/>
    <property type="molecule type" value="Genomic_DNA"/>
</dbReference>
<dbReference type="EMBL" id="AB070146">
    <property type="protein sequence ID" value="BAB63091.1"/>
    <property type="status" value="ALT_SEQ"/>
    <property type="molecule type" value="mRNA"/>
</dbReference>
<dbReference type="RefSeq" id="XP_005545411.1">
    <molecule id="Q95JN5-3"/>
    <property type="nucleotide sequence ID" value="XM_005545354.4"/>
</dbReference>
<dbReference type="RefSeq" id="XP_005545412.1">
    <property type="nucleotide sequence ID" value="XM_005545355.2"/>
</dbReference>
<dbReference type="RefSeq" id="XP_005545415.1">
    <property type="nucleotide sequence ID" value="XM_005545358.2"/>
</dbReference>
<dbReference type="RefSeq" id="XP_015300393.1">
    <molecule id="Q95JN5-3"/>
    <property type="nucleotide sequence ID" value="XM_015444907.3"/>
</dbReference>
<dbReference type="RefSeq" id="XP_015300394.1">
    <property type="nucleotide sequence ID" value="XM_015444908.1"/>
</dbReference>
<dbReference type="RefSeq" id="XP_015300395.1">
    <molecule id="Q95JN5-3"/>
    <property type="nucleotide sequence ID" value="XM_015444909.3"/>
</dbReference>
<dbReference type="RefSeq" id="XP_015300396.1">
    <property type="nucleotide sequence ID" value="XM_015444910.1"/>
</dbReference>
<dbReference type="RefSeq" id="XP_015300397.1">
    <property type="nucleotide sequence ID" value="XM_015444911.1"/>
</dbReference>
<dbReference type="RefSeq" id="XP_045243138.1">
    <molecule id="Q95JN5-3"/>
    <property type="nucleotide sequence ID" value="XM_045387203.2"/>
</dbReference>
<dbReference type="RefSeq" id="XP_045243139.1">
    <molecule id="Q95JN5-3"/>
    <property type="nucleotide sequence ID" value="XM_045387204.2"/>
</dbReference>
<dbReference type="RefSeq" id="XP_045243146.1">
    <molecule id="Q95JN5-1"/>
    <property type="nucleotide sequence ID" value="XM_045387211.2"/>
</dbReference>
<dbReference type="RefSeq" id="XP_065395769.1">
    <molecule id="Q95JN5-3"/>
    <property type="nucleotide sequence ID" value="XM_065539697.1"/>
</dbReference>
<dbReference type="RefSeq" id="XP_065395770.1">
    <molecule id="Q95JN5-3"/>
    <property type="nucleotide sequence ID" value="XM_065539698.1"/>
</dbReference>
<dbReference type="SMR" id="Q95JN5"/>
<dbReference type="STRING" id="9541.ENSMFAP00000043640"/>
<dbReference type="Ensembl" id="ENSMFAT00000017930.2">
    <molecule id="Q95JN5-3"/>
    <property type="protein sequence ID" value="ENSMFAP00000043640.1"/>
    <property type="gene ID" value="ENSMFAG00000039232.2"/>
</dbReference>
<dbReference type="GeneID" id="102142290"/>
<dbReference type="CTD" id="79572"/>
<dbReference type="VEuPathDB" id="HostDB:ENSMFAG00000039232"/>
<dbReference type="eggNOG" id="KOG0208">
    <property type="taxonomic scope" value="Eukaryota"/>
</dbReference>
<dbReference type="GeneTree" id="ENSGT00940000155941"/>
<dbReference type="OMA" id="FSCFQYM"/>
<dbReference type="Proteomes" id="UP000233100">
    <property type="component" value="Chromosome 2"/>
</dbReference>
<dbReference type="GO" id="GO:0031901">
    <property type="term" value="C:early endosome membrane"/>
    <property type="evidence" value="ECO:0000250"/>
    <property type="project" value="UniProtKB"/>
</dbReference>
<dbReference type="GO" id="GO:0031902">
    <property type="term" value="C:late endosome membrane"/>
    <property type="evidence" value="ECO:0000250"/>
    <property type="project" value="UniProtKB"/>
</dbReference>
<dbReference type="GO" id="GO:0055038">
    <property type="term" value="C:recycling endosome membrane"/>
    <property type="evidence" value="ECO:0000250"/>
    <property type="project" value="UniProtKB"/>
</dbReference>
<dbReference type="GO" id="GO:0015594">
    <property type="term" value="F:ABC-type putrescine transporter activity"/>
    <property type="evidence" value="ECO:0007669"/>
    <property type="project" value="UniProtKB-EC"/>
</dbReference>
<dbReference type="GO" id="GO:0005524">
    <property type="term" value="F:ATP binding"/>
    <property type="evidence" value="ECO:0007669"/>
    <property type="project" value="UniProtKB-KW"/>
</dbReference>
<dbReference type="GO" id="GO:0016887">
    <property type="term" value="F:ATP hydrolysis activity"/>
    <property type="evidence" value="ECO:0007669"/>
    <property type="project" value="InterPro"/>
</dbReference>
<dbReference type="GO" id="GO:0019829">
    <property type="term" value="F:ATPase-coupled monoatomic cation transmembrane transporter activity"/>
    <property type="evidence" value="ECO:0007669"/>
    <property type="project" value="InterPro"/>
</dbReference>
<dbReference type="GO" id="GO:0046872">
    <property type="term" value="F:metal ion binding"/>
    <property type="evidence" value="ECO:0007669"/>
    <property type="project" value="UniProtKB-KW"/>
</dbReference>
<dbReference type="GO" id="GO:0015662">
    <property type="term" value="F:P-type ion transporter activity"/>
    <property type="evidence" value="ECO:0007669"/>
    <property type="project" value="InterPro"/>
</dbReference>
<dbReference type="GO" id="GO:0140358">
    <property type="term" value="F:P-type transmembrane transporter activity"/>
    <property type="evidence" value="ECO:0000250"/>
    <property type="project" value="UniProtKB"/>
</dbReference>
<dbReference type="GO" id="GO:0006874">
    <property type="term" value="P:intracellular calcium ion homeostasis"/>
    <property type="evidence" value="ECO:0007669"/>
    <property type="project" value="TreeGrafter"/>
</dbReference>
<dbReference type="CDD" id="cd07542">
    <property type="entry name" value="P-type_ATPase_cation"/>
    <property type="match status" value="1"/>
</dbReference>
<dbReference type="FunFam" id="1.20.1110.10:FF:000023">
    <property type="entry name" value="Cation-transporting ATPase"/>
    <property type="match status" value="1"/>
</dbReference>
<dbReference type="FunFam" id="1.20.1110.10:FF:000026">
    <property type="entry name" value="Cation-transporting ATPase"/>
    <property type="match status" value="1"/>
</dbReference>
<dbReference type="FunFam" id="2.70.150.10:FF:000017">
    <property type="entry name" value="Cation-transporting ATPase"/>
    <property type="match status" value="1"/>
</dbReference>
<dbReference type="FunFam" id="3.40.1110.10:FF:000026">
    <property type="entry name" value="Cation-transporting ATPase"/>
    <property type="match status" value="1"/>
</dbReference>
<dbReference type="FunFam" id="3.40.50.1000:FF:000045">
    <property type="entry name" value="Cation-transporting ATPase"/>
    <property type="match status" value="1"/>
</dbReference>
<dbReference type="Gene3D" id="3.40.1110.10">
    <property type="entry name" value="Calcium-transporting ATPase, cytoplasmic domain N"/>
    <property type="match status" value="1"/>
</dbReference>
<dbReference type="Gene3D" id="2.70.150.10">
    <property type="entry name" value="Calcium-transporting ATPase, cytoplasmic transduction domain A"/>
    <property type="match status" value="1"/>
</dbReference>
<dbReference type="Gene3D" id="1.20.1110.10">
    <property type="entry name" value="Calcium-transporting ATPase, transmembrane domain"/>
    <property type="match status" value="1"/>
</dbReference>
<dbReference type="Gene3D" id="3.40.50.1000">
    <property type="entry name" value="HAD superfamily/HAD-like"/>
    <property type="match status" value="1"/>
</dbReference>
<dbReference type="InterPro" id="IPR004014">
    <property type="entry name" value="ATPase_P-typ_cation-transptr_N"/>
</dbReference>
<dbReference type="InterPro" id="IPR023299">
    <property type="entry name" value="ATPase_P-typ_cyto_dom_N"/>
</dbReference>
<dbReference type="InterPro" id="IPR018303">
    <property type="entry name" value="ATPase_P-typ_P_site"/>
</dbReference>
<dbReference type="InterPro" id="IPR023298">
    <property type="entry name" value="ATPase_P-typ_TM_dom_sf"/>
</dbReference>
<dbReference type="InterPro" id="IPR008250">
    <property type="entry name" value="ATPase_P-typ_transduc_dom_A_sf"/>
</dbReference>
<dbReference type="InterPro" id="IPR036412">
    <property type="entry name" value="HAD-like_sf"/>
</dbReference>
<dbReference type="InterPro" id="IPR023214">
    <property type="entry name" value="HAD_sf"/>
</dbReference>
<dbReference type="InterPro" id="IPR006544">
    <property type="entry name" value="P-type_TPase_V"/>
</dbReference>
<dbReference type="InterPro" id="IPR047819">
    <property type="entry name" value="P5A-ATPase_N"/>
</dbReference>
<dbReference type="InterPro" id="IPR047821">
    <property type="entry name" value="P5B-type_ATPase"/>
</dbReference>
<dbReference type="InterPro" id="IPR001757">
    <property type="entry name" value="P_typ_ATPase"/>
</dbReference>
<dbReference type="InterPro" id="IPR044492">
    <property type="entry name" value="P_typ_ATPase_HD_dom"/>
</dbReference>
<dbReference type="NCBIfam" id="TIGR01494">
    <property type="entry name" value="ATPase_P-type"/>
    <property type="match status" value="3"/>
</dbReference>
<dbReference type="NCBIfam" id="TIGR01657">
    <property type="entry name" value="P-ATPase-V"/>
    <property type="match status" value="1"/>
</dbReference>
<dbReference type="PANTHER" id="PTHR45630">
    <property type="entry name" value="CATION-TRANSPORTING ATPASE-RELATED"/>
    <property type="match status" value="1"/>
</dbReference>
<dbReference type="PANTHER" id="PTHR45630:SF12">
    <property type="entry name" value="POLYAMINE-TRANSPORTING ATPASE 13A3"/>
    <property type="match status" value="1"/>
</dbReference>
<dbReference type="Pfam" id="PF13246">
    <property type="entry name" value="Cation_ATPase"/>
    <property type="match status" value="1"/>
</dbReference>
<dbReference type="Pfam" id="PF00690">
    <property type="entry name" value="Cation_ATPase_N"/>
    <property type="match status" value="1"/>
</dbReference>
<dbReference type="Pfam" id="PF00122">
    <property type="entry name" value="E1-E2_ATPase"/>
    <property type="match status" value="1"/>
</dbReference>
<dbReference type="Pfam" id="PF12409">
    <property type="entry name" value="P5-ATPase"/>
    <property type="match status" value="1"/>
</dbReference>
<dbReference type="PRINTS" id="PR00119">
    <property type="entry name" value="CATATPASE"/>
</dbReference>
<dbReference type="SFLD" id="SFLDG00002">
    <property type="entry name" value="C1.7:_P-type_atpase_like"/>
    <property type="match status" value="1"/>
</dbReference>
<dbReference type="SFLD" id="SFLDF00027">
    <property type="entry name" value="p-type_atpase"/>
    <property type="match status" value="1"/>
</dbReference>
<dbReference type="SUPFAM" id="SSF81653">
    <property type="entry name" value="Calcium ATPase, transduction domain A"/>
    <property type="match status" value="1"/>
</dbReference>
<dbReference type="SUPFAM" id="SSF81665">
    <property type="entry name" value="Calcium ATPase, transmembrane domain M"/>
    <property type="match status" value="1"/>
</dbReference>
<dbReference type="SUPFAM" id="SSF56784">
    <property type="entry name" value="HAD-like"/>
    <property type="match status" value="1"/>
</dbReference>
<dbReference type="SUPFAM" id="SSF81660">
    <property type="entry name" value="Metal cation-transporting ATPase, ATP-binding domain N"/>
    <property type="match status" value="1"/>
</dbReference>
<dbReference type="PROSITE" id="PS00154">
    <property type="entry name" value="ATPASE_E1_E2"/>
    <property type="match status" value="1"/>
</dbReference>
<keyword id="KW-0025">Alternative splicing</keyword>
<keyword id="KW-0067">ATP-binding</keyword>
<keyword id="KW-0967">Endosome</keyword>
<keyword id="KW-0460">Magnesium</keyword>
<keyword id="KW-0472">Membrane</keyword>
<keyword id="KW-0479">Metal-binding</keyword>
<keyword id="KW-0547">Nucleotide-binding</keyword>
<keyword id="KW-0597">Phosphoprotein</keyword>
<keyword id="KW-1185">Reference proteome</keyword>
<keyword id="KW-1278">Translocase</keyword>
<keyword id="KW-0812">Transmembrane</keyword>
<keyword id="KW-1133">Transmembrane helix</keyword>